<organism>
    <name type="scientific">Staphylococcus aureus (strain MSSA476)</name>
    <dbReference type="NCBI Taxonomy" id="282459"/>
    <lineage>
        <taxon>Bacteria</taxon>
        <taxon>Bacillati</taxon>
        <taxon>Bacillota</taxon>
        <taxon>Bacilli</taxon>
        <taxon>Bacillales</taxon>
        <taxon>Staphylococcaceae</taxon>
        <taxon>Staphylococcus</taxon>
    </lineage>
</organism>
<accession>Q6G8C1</accession>
<feature type="signal peptide" evidence="1">
    <location>
        <begin position="1"/>
        <end position="35"/>
    </location>
</feature>
<feature type="chain" id="PRO_0000359528" description="Serine protease SplA">
    <location>
        <begin position="36"/>
        <end position="235"/>
    </location>
</feature>
<feature type="active site" description="Charge relay system" evidence="1">
    <location>
        <position position="74"/>
    </location>
</feature>
<feature type="active site" description="Charge relay system" evidence="1">
    <location>
        <position position="113"/>
    </location>
</feature>
<feature type="active site" description="Charge relay system" evidence="1">
    <location>
        <position position="189"/>
    </location>
</feature>
<protein>
    <recommendedName>
        <fullName>Serine protease SplA</fullName>
        <ecNumber>3.4.21.-</ecNumber>
    </recommendedName>
</protein>
<keyword id="KW-0378">Hydrolase</keyword>
<keyword id="KW-0645">Protease</keyword>
<keyword id="KW-0964">Secreted</keyword>
<keyword id="KW-0720">Serine protease</keyword>
<keyword id="KW-0732">Signal</keyword>
<comment type="subcellular location">
    <subcellularLocation>
        <location evidence="1">Secreted</location>
    </subcellularLocation>
</comment>
<comment type="similarity">
    <text evidence="2">Belongs to the peptidase S1B family.</text>
</comment>
<sequence length="235" mass="25550">MNENVMVKGLTALTILTSLGFAENISNQPHSIAKAEKNVKEITDATKEPYNSVVAFVGGTGVVVGKNTIVTNKHIAKSNDIFKNRVSAHHSSKGKGGGNYDVKDIVEYPGKEDLAIVHVHETSTEGLNFNKNVSYTKFADGAKVKDRISVIGYPKGAQTKYKMFESTGTINHISGTFMEFDAYAQPGNSGSPVLNSKHELIGILYAGSGKDESEKNFGVYFTPQLKEFIQNNIEK</sequence>
<dbReference type="EC" id="3.4.21.-"/>
<dbReference type="EMBL" id="BX571857">
    <property type="protein sequence ID" value="CAG43540.1"/>
    <property type="molecule type" value="Genomic_DNA"/>
</dbReference>
<dbReference type="RefSeq" id="WP_001005059.1">
    <property type="nucleotide sequence ID" value="NC_002953.3"/>
</dbReference>
<dbReference type="SMR" id="Q6G8C1"/>
<dbReference type="MEROPS" id="S01.503"/>
<dbReference type="KEGG" id="sas:SAS1736"/>
<dbReference type="HOGENOM" id="CLU_073589_2_0_9"/>
<dbReference type="GO" id="GO:0005576">
    <property type="term" value="C:extracellular region"/>
    <property type="evidence" value="ECO:0007669"/>
    <property type="project" value="UniProtKB-SubCell"/>
</dbReference>
<dbReference type="GO" id="GO:0004252">
    <property type="term" value="F:serine-type endopeptidase activity"/>
    <property type="evidence" value="ECO:0007669"/>
    <property type="project" value="InterPro"/>
</dbReference>
<dbReference type="GO" id="GO:0006508">
    <property type="term" value="P:proteolysis"/>
    <property type="evidence" value="ECO:0007669"/>
    <property type="project" value="UniProtKB-KW"/>
</dbReference>
<dbReference type="Gene3D" id="2.40.10.10">
    <property type="entry name" value="Trypsin-like serine proteases"/>
    <property type="match status" value="2"/>
</dbReference>
<dbReference type="InterPro" id="IPR009003">
    <property type="entry name" value="Peptidase_S1_PA"/>
</dbReference>
<dbReference type="InterPro" id="IPR043504">
    <property type="entry name" value="Peptidase_S1_PA_chymotrypsin"/>
</dbReference>
<dbReference type="InterPro" id="IPR008256">
    <property type="entry name" value="Peptidase_S1B"/>
</dbReference>
<dbReference type="InterPro" id="IPR008353">
    <property type="entry name" value="Peptidase_S1B_tx"/>
</dbReference>
<dbReference type="InterPro" id="IPR001254">
    <property type="entry name" value="Trypsin_dom"/>
</dbReference>
<dbReference type="InterPro" id="IPR028301">
    <property type="entry name" value="V8_his_AS"/>
</dbReference>
<dbReference type="PANTHER" id="PTHR43019:SF23">
    <property type="entry name" value="PROTEASE DO-LIKE 5, CHLOROPLASTIC"/>
    <property type="match status" value="1"/>
</dbReference>
<dbReference type="PANTHER" id="PTHR43019">
    <property type="entry name" value="SERINE ENDOPROTEASE DEGS"/>
    <property type="match status" value="1"/>
</dbReference>
<dbReference type="Pfam" id="PF00089">
    <property type="entry name" value="Trypsin"/>
    <property type="match status" value="1"/>
</dbReference>
<dbReference type="PRINTS" id="PR01774">
    <property type="entry name" value="EXFOLTOXIN"/>
</dbReference>
<dbReference type="PRINTS" id="PR00839">
    <property type="entry name" value="V8PROTEASE"/>
</dbReference>
<dbReference type="SUPFAM" id="SSF50494">
    <property type="entry name" value="Trypsin-like serine proteases"/>
    <property type="match status" value="1"/>
</dbReference>
<dbReference type="PROSITE" id="PS00672">
    <property type="entry name" value="V8_HIS"/>
    <property type="match status" value="1"/>
</dbReference>
<reference key="1">
    <citation type="journal article" date="2004" name="Proc. Natl. Acad. Sci. U.S.A.">
        <title>Complete genomes of two clinical Staphylococcus aureus strains: evidence for the rapid evolution of virulence and drug resistance.</title>
        <authorList>
            <person name="Holden M.T.G."/>
            <person name="Feil E.J."/>
            <person name="Lindsay J.A."/>
            <person name="Peacock S.J."/>
            <person name="Day N.P.J."/>
            <person name="Enright M.C."/>
            <person name="Foster T.J."/>
            <person name="Moore C.E."/>
            <person name="Hurst L."/>
            <person name="Atkin R."/>
            <person name="Barron A."/>
            <person name="Bason N."/>
            <person name="Bentley S.D."/>
            <person name="Chillingworth C."/>
            <person name="Chillingworth T."/>
            <person name="Churcher C."/>
            <person name="Clark L."/>
            <person name="Corton C."/>
            <person name="Cronin A."/>
            <person name="Doggett J."/>
            <person name="Dowd L."/>
            <person name="Feltwell T."/>
            <person name="Hance Z."/>
            <person name="Harris B."/>
            <person name="Hauser H."/>
            <person name="Holroyd S."/>
            <person name="Jagels K."/>
            <person name="James K.D."/>
            <person name="Lennard N."/>
            <person name="Line A."/>
            <person name="Mayes R."/>
            <person name="Moule S."/>
            <person name="Mungall K."/>
            <person name="Ormond D."/>
            <person name="Quail M.A."/>
            <person name="Rabbinowitsch E."/>
            <person name="Rutherford K.M."/>
            <person name="Sanders M."/>
            <person name="Sharp S."/>
            <person name="Simmonds M."/>
            <person name="Stevens K."/>
            <person name="Whitehead S."/>
            <person name="Barrell B.G."/>
            <person name="Spratt B.G."/>
            <person name="Parkhill J."/>
        </authorList>
    </citation>
    <scope>NUCLEOTIDE SEQUENCE [LARGE SCALE GENOMIC DNA]</scope>
    <source>
        <strain>MSSA476</strain>
    </source>
</reference>
<gene>
    <name type="primary">splA</name>
    <name type="ordered locus">SAS1736</name>
</gene>
<proteinExistence type="inferred from homology"/>
<name>SPLA_STAAS</name>
<evidence type="ECO:0000250" key="1"/>
<evidence type="ECO:0000305" key="2"/>